<organism>
    <name type="scientific">Methanothrix thermoacetophila (strain DSM 6194 / JCM 14653 / NBRC 101360 / PT)</name>
    <name type="common">Methanosaeta thermophila</name>
    <dbReference type="NCBI Taxonomy" id="349307"/>
    <lineage>
        <taxon>Archaea</taxon>
        <taxon>Methanobacteriati</taxon>
        <taxon>Methanobacteriota</taxon>
        <taxon>Stenosarchaea group</taxon>
        <taxon>Methanomicrobia</taxon>
        <taxon>Methanotrichales</taxon>
        <taxon>Methanotrichaceae</taxon>
        <taxon>Methanothrix</taxon>
    </lineage>
</organism>
<reference key="1">
    <citation type="submission" date="2006-10" db="EMBL/GenBank/DDBJ databases">
        <title>Complete sequence of Methanosaeta thermophila PT.</title>
        <authorList>
            <consortium name="US DOE Joint Genome Institute"/>
            <person name="Copeland A."/>
            <person name="Lucas S."/>
            <person name="Lapidus A."/>
            <person name="Barry K."/>
            <person name="Detter J.C."/>
            <person name="Glavina del Rio T."/>
            <person name="Hammon N."/>
            <person name="Israni S."/>
            <person name="Pitluck S."/>
            <person name="Chain P."/>
            <person name="Malfatti S."/>
            <person name="Shin M."/>
            <person name="Vergez L."/>
            <person name="Schmutz J."/>
            <person name="Larimer F."/>
            <person name="Land M."/>
            <person name="Hauser L."/>
            <person name="Kyrpides N."/>
            <person name="Kim E."/>
            <person name="Smith K.S."/>
            <person name="Ingram-Smith C."/>
            <person name="Richardson P."/>
        </authorList>
    </citation>
    <scope>NUCLEOTIDE SEQUENCE [LARGE SCALE GENOMIC DNA]</scope>
    <source>
        <strain>DSM 6194 / JCM 14653 / NBRC 101360 / PT</strain>
    </source>
</reference>
<gene>
    <name evidence="1" type="primary">rpl30e</name>
    <name type="ordered locus">Mthe_0031</name>
</gene>
<keyword id="KW-1185">Reference proteome</keyword>
<keyword id="KW-0687">Ribonucleoprotein</keyword>
<keyword id="KW-0689">Ribosomal protein</keyword>
<protein>
    <recommendedName>
        <fullName evidence="1">Large ribosomal subunit protein eL30</fullName>
    </recommendedName>
    <alternativeName>
        <fullName evidence="2">50S ribosomal protein L30e</fullName>
    </alternativeName>
</protein>
<comment type="similarity">
    <text evidence="1">Belongs to the eukaryotic ribosomal protein eL30 family.</text>
</comment>
<accession>A0B560</accession>
<feature type="chain" id="PRO_1000014326" description="Large ribosomal subunit protein eL30">
    <location>
        <begin position="1"/>
        <end position="103"/>
    </location>
</feature>
<proteinExistence type="inferred from homology"/>
<name>RL30E_METTP</name>
<dbReference type="EMBL" id="CP000477">
    <property type="protein sequence ID" value="ABK13834.1"/>
    <property type="molecule type" value="Genomic_DNA"/>
</dbReference>
<dbReference type="RefSeq" id="WP_011695235.1">
    <property type="nucleotide sequence ID" value="NC_008553.1"/>
</dbReference>
<dbReference type="SMR" id="A0B560"/>
<dbReference type="STRING" id="349307.Mthe_0031"/>
<dbReference type="GeneID" id="4463409"/>
<dbReference type="KEGG" id="mtp:Mthe_0031"/>
<dbReference type="HOGENOM" id="CLU_130502_1_1_2"/>
<dbReference type="OrthoDB" id="10759at2157"/>
<dbReference type="Proteomes" id="UP000000674">
    <property type="component" value="Chromosome"/>
</dbReference>
<dbReference type="GO" id="GO:0022625">
    <property type="term" value="C:cytosolic large ribosomal subunit"/>
    <property type="evidence" value="ECO:0007669"/>
    <property type="project" value="InterPro"/>
</dbReference>
<dbReference type="GO" id="GO:0003723">
    <property type="term" value="F:RNA binding"/>
    <property type="evidence" value="ECO:0007669"/>
    <property type="project" value="InterPro"/>
</dbReference>
<dbReference type="GO" id="GO:0003735">
    <property type="term" value="F:structural constituent of ribosome"/>
    <property type="evidence" value="ECO:0007669"/>
    <property type="project" value="InterPro"/>
</dbReference>
<dbReference type="GO" id="GO:0006412">
    <property type="term" value="P:translation"/>
    <property type="evidence" value="ECO:0007669"/>
    <property type="project" value="UniProtKB-UniRule"/>
</dbReference>
<dbReference type="Gene3D" id="3.30.1330.30">
    <property type="match status" value="1"/>
</dbReference>
<dbReference type="HAMAP" id="MF_00481">
    <property type="entry name" value="Ribosomal_eL30"/>
    <property type="match status" value="1"/>
</dbReference>
<dbReference type="InterPro" id="IPR000231">
    <property type="entry name" value="Ribosomal_eL30"/>
</dbReference>
<dbReference type="InterPro" id="IPR039109">
    <property type="entry name" value="Ribosomal_eL30-like"/>
</dbReference>
<dbReference type="InterPro" id="IPR029064">
    <property type="entry name" value="Ribosomal_eL30-like_sf"/>
</dbReference>
<dbReference type="InterPro" id="IPR022991">
    <property type="entry name" value="Ribosomal_eL30_CS"/>
</dbReference>
<dbReference type="InterPro" id="IPR004038">
    <property type="entry name" value="Ribosomal_eL8/eL30/eS12/Gad45"/>
</dbReference>
<dbReference type="NCBIfam" id="NF002172">
    <property type="entry name" value="PRK01018.1"/>
    <property type="match status" value="1"/>
</dbReference>
<dbReference type="PANTHER" id="PTHR11449">
    <property type="entry name" value="RIBOSOMAL PROTEIN L30"/>
    <property type="match status" value="1"/>
</dbReference>
<dbReference type="Pfam" id="PF01248">
    <property type="entry name" value="Ribosomal_L7Ae"/>
    <property type="match status" value="1"/>
</dbReference>
<dbReference type="SUPFAM" id="SSF55315">
    <property type="entry name" value="L30e-like"/>
    <property type="match status" value="1"/>
</dbReference>
<dbReference type="PROSITE" id="PS00993">
    <property type="entry name" value="RIBOSOMAL_L30E_2"/>
    <property type="match status" value="1"/>
</dbReference>
<evidence type="ECO:0000255" key="1">
    <source>
        <dbReference type="HAMAP-Rule" id="MF_00481"/>
    </source>
</evidence>
<evidence type="ECO:0000305" key="2"/>
<sequence length="103" mass="11090">MINIDRALRSSIRTGKVVLGSNSSLEHGLRGDAKLIIYASDCPEHVRQKLRSLEVPVYAYQSSGRDLGAACGKPFPVAALAVIEPGDSEIMALLREIRGVANE</sequence>